<keyword id="KW-0004">4Fe-4S</keyword>
<keyword id="KW-0997">Cell inner membrane</keyword>
<keyword id="KW-1003">Cell membrane</keyword>
<keyword id="KW-0408">Iron</keyword>
<keyword id="KW-0411">Iron-sulfur</keyword>
<keyword id="KW-0472">Membrane</keyword>
<keyword id="KW-0479">Metal-binding</keyword>
<keyword id="KW-0520">NAD</keyword>
<keyword id="KW-0874">Quinone</keyword>
<keyword id="KW-1185">Reference proteome</keyword>
<keyword id="KW-1278">Translocase</keyword>
<keyword id="KW-0813">Transport</keyword>
<keyword id="KW-0830">Ubiquinone</keyword>
<gene>
    <name evidence="2" type="primary">nuoB</name>
    <name type="ordered locus">HNE_1743</name>
</gene>
<name>NUOB_HYPNA</name>
<feature type="chain" id="PRO_0000358413" description="NADH-quinone oxidoreductase subunit B">
    <location>
        <begin position="1"/>
        <end position="190"/>
    </location>
</feature>
<feature type="binding site" evidence="2">
    <location>
        <position position="69"/>
    </location>
    <ligand>
        <name>[4Fe-4S] cluster</name>
        <dbReference type="ChEBI" id="CHEBI:49883"/>
    </ligand>
</feature>
<feature type="binding site" evidence="2">
    <location>
        <position position="70"/>
    </location>
    <ligand>
        <name>[4Fe-4S] cluster</name>
        <dbReference type="ChEBI" id="CHEBI:49883"/>
    </ligand>
</feature>
<feature type="binding site" evidence="2">
    <location>
        <position position="134"/>
    </location>
    <ligand>
        <name>[4Fe-4S] cluster</name>
        <dbReference type="ChEBI" id="CHEBI:49883"/>
    </ligand>
</feature>
<feature type="binding site" evidence="2">
    <location>
        <position position="164"/>
    </location>
    <ligand>
        <name>[4Fe-4S] cluster</name>
        <dbReference type="ChEBI" id="CHEBI:49883"/>
    </ligand>
</feature>
<sequence length="190" mass="20810">MSDNSYKPYALGAARAGVDGGFKPGNDDPFYSGLSDQLADKGYFTAAADDLISWARTGSLMWMTFGLACCAVEMMHAGNPRYDLERFGMAPRGSPRQSDVMIVAGTLTNKMAPALRKVYDQMPEPRYVISMGSCANGGGYYHYSYSVVRGCDRIVPVDIYIPGCPPTAEALVYGFLQLQKKIRREGSIER</sequence>
<evidence type="ECO:0000250" key="1"/>
<evidence type="ECO:0000255" key="2">
    <source>
        <dbReference type="HAMAP-Rule" id="MF_01356"/>
    </source>
</evidence>
<dbReference type="EC" id="7.1.1.-" evidence="2"/>
<dbReference type="EMBL" id="CP000158">
    <property type="protein sequence ID" value="ABI77907.1"/>
    <property type="molecule type" value="Genomic_DNA"/>
</dbReference>
<dbReference type="SMR" id="Q0C1E6"/>
<dbReference type="STRING" id="228405.HNE_1743"/>
<dbReference type="KEGG" id="hne:HNE_1743"/>
<dbReference type="eggNOG" id="COG0377">
    <property type="taxonomic scope" value="Bacteria"/>
</dbReference>
<dbReference type="HOGENOM" id="CLU_055737_7_3_5"/>
<dbReference type="Proteomes" id="UP000001959">
    <property type="component" value="Chromosome"/>
</dbReference>
<dbReference type="GO" id="GO:0005886">
    <property type="term" value="C:plasma membrane"/>
    <property type="evidence" value="ECO:0007669"/>
    <property type="project" value="UniProtKB-SubCell"/>
</dbReference>
<dbReference type="GO" id="GO:0045271">
    <property type="term" value="C:respiratory chain complex I"/>
    <property type="evidence" value="ECO:0007669"/>
    <property type="project" value="TreeGrafter"/>
</dbReference>
<dbReference type="GO" id="GO:0051539">
    <property type="term" value="F:4 iron, 4 sulfur cluster binding"/>
    <property type="evidence" value="ECO:0007669"/>
    <property type="project" value="UniProtKB-KW"/>
</dbReference>
<dbReference type="GO" id="GO:0005506">
    <property type="term" value="F:iron ion binding"/>
    <property type="evidence" value="ECO:0007669"/>
    <property type="project" value="UniProtKB-UniRule"/>
</dbReference>
<dbReference type="GO" id="GO:0008137">
    <property type="term" value="F:NADH dehydrogenase (ubiquinone) activity"/>
    <property type="evidence" value="ECO:0007669"/>
    <property type="project" value="InterPro"/>
</dbReference>
<dbReference type="GO" id="GO:0050136">
    <property type="term" value="F:NADH:ubiquinone reductase (non-electrogenic) activity"/>
    <property type="evidence" value="ECO:0007669"/>
    <property type="project" value="UniProtKB-UniRule"/>
</dbReference>
<dbReference type="GO" id="GO:0048038">
    <property type="term" value="F:quinone binding"/>
    <property type="evidence" value="ECO:0007669"/>
    <property type="project" value="UniProtKB-KW"/>
</dbReference>
<dbReference type="GO" id="GO:0009060">
    <property type="term" value="P:aerobic respiration"/>
    <property type="evidence" value="ECO:0007669"/>
    <property type="project" value="TreeGrafter"/>
</dbReference>
<dbReference type="GO" id="GO:0015990">
    <property type="term" value="P:electron transport coupled proton transport"/>
    <property type="evidence" value="ECO:0007669"/>
    <property type="project" value="TreeGrafter"/>
</dbReference>
<dbReference type="FunFam" id="3.40.50.12280:FF:000001">
    <property type="entry name" value="NADH-quinone oxidoreductase subunit B 2"/>
    <property type="match status" value="1"/>
</dbReference>
<dbReference type="Gene3D" id="3.40.50.12280">
    <property type="match status" value="1"/>
</dbReference>
<dbReference type="HAMAP" id="MF_01356">
    <property type="entry name" value="NDH1_NuoB"/>
    <property type="match status" value="1"/>
</dbReference>
<dbReference type="InterPro" id="IPR006137">
    <property type="entry name" value="NADH_UbQ_OxRdtase-like_20kDa"/>
</dbReference>
<dbReference type="InterPro" id="IPR006138">
    <property type="entry name" value="NADH_UQ_OxRdtase_20Kd_su"/>
</dbReference>
<dbReference type="NCBIfam" id="TIGR01957">
    <property type="entry name" value="nuoB_fam"/>
    <property type="match status" value="1"/>
</dbReference>
<dbReference type="NCBIfam" id="NF005012">
    <property type="entry name" value="PRK06411.1"/>
    <property type="match status" value="1"/>
</dbReference>
<dbReference type="PANTHER" id="PTHR11995">
    <property type="entry name" value="NADH DEHYDROGENASE"/>
    <property type="match status" value="1"/>
</dbReference>
<dbReference type="PANTHER" id="PTHR11995:SF14">
    <property type="entry name" value="NADH DEHYDROGENASE [UBIQUINONE] IRON-SULFUR PROTEIN 7, MITOCHONDRIAL"/>
    <property type="match status" value="1"/>
</dbReference>
<dbReference type="Pfam" id="PF01058">
    <property type="entry name" value="Oxidored_q6"/>
    <property type="match status" value="1"/>
</dbReference>
<dbReference type="SUPFAM" id="SSF56770">
    <property type="entry name" value="HydA/Nqo6-like"/>
    <property type="match status" value="1"/>
</dbReference>
<dbReference type="PROSITE" id="PS01150">
    <property type="entry name" value="COMPLEX1_20K"/>
    <property type="match status" value="1"/>
</dbReference>
<proteinExistence type="inferred from homology"/>
<protein>
    <recommendedName>
        <fullName evidence="2">NADH-quinone oxidoreductase subunit B</fullName>
        <ecNumber evidence="2">7.1.1.-</ecNumber>
    </recommendedName>
    <alternativeName>
        <fullName evidence="2">NADH dehydrogenase I subunit B</fullName>
    </alternativeName>
    <alternativeName>
        <fullName evidence="2">NDH-1 subunit B</fullName>
    </alternativeName>
</protein>
<comment type="function">
    <text evidence="1">NDH-1 shuttles electrons from NADH, via FMN and iron-sulfur (Fe-S) centers, to quinones in the respiratory chain. Couples the redox reaction to proton translocation (for every two electrons transferred, four hydrogen ions are translocated across the cytoplasmic membrane), and thus conserves the redox energy in a proton gradient (By similarity).</text>
</comment>
<comment type="catalytic activity">
    <reaction evidence="2">
        <text>a quinone + NADH + 5 H(+)(in) = a quinol + NAD(+) + 4 H(+)(out)</text>
        <dbReference type="Rhea" id="RHEA:57888"/>
        <dbReference type="ChEBI" id="CHEBI:15378"/>
        <dbReference type="ChEBI" id="CHEBI:24646"/>
        <dbReference type="ChEBI" id="CHEBI:57540"/>
        <dbReference type="ChEBI" id="CHEBI:57945"/>
        <dbReference type="ChEBI" id="CHEBI:132124"/>
    </reaction>
</comment>
<comment type="cofactor">
    <cofactor evidence="2">
        <name>[4Fe-4S] cluster</name>
        <dbReference type="ChEBI" id="CHEBI:49883"/>
    </cofactor>
    <text evidence="2">Binds 1 [4Fe-4S] cluster.</text>
</comment>
<comment type="subunit">
    <text evidence="2">NDH-1 is composed of 14 different subunits. Subunits NuoB, C, D, E, F, and G constitute the peripheral sector of the complex.</text>
</comment>
<comment type="subcellular location">
    <subcellularLocation>
        <location evidence="2">Cell inner membrane</location>
        <topology evidence="2">Peripheral membrane protein</topology>
        <orientation evidence="2">Cytoplasmic side</orientation>
    </subcellularLocation>
</comment>
<comment type="similarity">
    <text evidence="2">Belongs to the complex I 20 kDa subunit family.</text>
</comment>
<organism>
    <name type="scientific">Hyphomonas neptunium (strain ATCC 15444)</name>
    <dbReference type="NCBI Taxonomy" id="228405"/>
    <lineage>
        <taxon>Bacteria</taxon>
        <taxon>Pseudomonadati</taxon>
        <taxon>Pseudomonadota</taxon>
        <taxon>Alphaproteobacteria</taxon>
        <taxon>Hyphomonadales</taxon>
        <taxon>Hyphomonadaceae</taxon>
        <taxon>Hyphomonas</taxon>
    </lineage>
</organism>
<reference key="1">
    <citation type="journal article" date="2006" name="J. Bacteriol.">
        <title>Comparative genomic evidence for a close relationship between the dimorphic prosthecate bacteria Hyphomonas neptunium and Caulobacter crescentus.</title>
        <authorList>
            <person name="Badger J.H."/>
            <person name="Hoover T.R."/>
            <person name="Brun Y.V."/>
            <person name="Weiner R.M."/>
            <person name="Laub M.T."/>
            <person name="Alexandre G."/>
            <person name="Mrazek J."/>
            <person name="Ren Q."/>
            <person name="Paulsen I.T."/>
            <person name="Nelson K.E."/>
            <person name="Khouri H.M."/>
            <person name="Radune D."/>
            <person name="Sosa J."/>
            <person name="Dodson R.J."/>
            <person name="Sullivan S.A."/>
            <person name="Rosovitz M.J."/>
            <person name="Madupu R."/>
            <person name="Brinkac L.M."/>
            <person name="Durkin A.S."/>
            <person name="Daugherty S.C."/>
            <person name="Kothari S.P."/>
            <person name="Giglio M.G."/>
            <person name="Zhou L."/>
            <person name="Haft D.H."/>
            <person name="Selengut J.D."/>
            <person name="Davidsen T.M."/>
            <person name="Yang Q."/>
            <person name="Zafar N."/>
            <person name="Ward N.L."/>
        </authorList>
    </citation>
    <scope>NUCLEOTIDE SEQUENCE [LARGE SCALE GENOMIC DNA]</scope>
    <source>
        <strain>ATCC 15444</strain>
    </source>
</reference>
<accession>Q0C1E6</accession>